<feature type="chain" id="PRO_0000118309" description="NADH-ubiquinone oxidoreductase chain 6">
    <location>
        <begin position="1"/>
        <end position="174"/>
    </location>
</feature>
<feature type="transmembrane region" description="Helical" evidence="3">
    <location>
        <begin position="1"/>
        <end position="21"/>
    </location>
</feature>
<feature type="transmembrane region" description="Helical" evidence="3">
    <location>
        <begin position="24"/>
        <end position="44"/>
    </location>
</feature>
<feature type="transmembrane region" description="Helical" evidence="3">
    <location>
        <begin position="47"/>
        <end position="67"/>
    </location>
</feature>
<feature type="transmembrane region" description="Helical" evidence="3">
    <location>
        <begin position="86"/>
        <end position="106"/>
    </location>
</feature>
<feature type="transmembrane region" description="Helical" evidence="3">
    <location>
        <begin position="111"/>
        <end position="131"/>
    </location>
</feature>
<feature type="transmembrane region" description="Helical" evidence="3">
    <location>
        <begin position="151"/>
        <end position="171"/>
    </location>
</feature>
<gene>
    <name type="primary">MT-ND6</name>
    <name type="synonym">MTND6</name>
    <name type="synonym">NADH6</name>
    <name type="synonym">ND6</name>
</gene>
<evidence type="ECO:0000250" key="1">
    <source>
        <dbReference type="UniProtKB" id="P03923"/>
    </source>
</evidence>
<evidence type="ECO:0000250" key="2">
    <source>
        <dbReference type="UniProtKB" id="P03924"/>
    </source>
</evidence>
<evidence type="ECO:0000255" key="3"/>
<evidence type="ECO:0000305" key="4"/>
<organism>
    <name type="scientific">Pan paniscus</name>
    <name type="common">Pygmy chimpanzee</name>
    <name type="synonym">Bonobo</name>
    <dbReference type="NCBI Taxonomy" id="9597"/>
    <lineage>
        <taxon>Eukaryota</taxon>
        <taxon>Metazoa</taxon>
        <taxon>Chordata</taxon>
        <taxon>Craniata</taxon>
        <taxon>Vertebrata</taxon>
        <taxon>Euteleostomi</taxon>
        <taxon>Mammalia</taxon>
        <taxon>Eutheria</taxon>
        <taxon>Euarchontoglires</taxon>
        <taxon>Primates</taxon>
        <taxon>Haplorrhini</taxon>
        <taxon>Catarrhini</taxon>
        <taxon>Hominidae</taxon>
        <taxon>Pan</taxon>
    </lineage>
</organism>
<name>NU6M_PANPA</name>
<proteinExistence type="inferred from homology"/>
<dbReference type="EC" id="7.1.1.2" evidence="1"/>
<dbReference type="EMBL" id="D38116">
    <property type="protein sequence ID" value="BAA85301.1"/>
    <property type="molecule type" value="Genomic_DNA"/>
</dbReference>
<dbReference type="RefSeq" id="NP_008210.1">
    <property type="nucleotide sequence ID" value="NC_001644.1"/>
</dbReference>
<dbReference type="SMR" id="Q9T9W5"/>
<dbReference type="STRING" id="9597.ENSPPAP00000000012"/>
<dbReference type="Ensembl" id="ENSPPAT00000000033.1">
    <property type="protein sequence ID" value="ENSPPAP00000000012.1"/>
    <property type="gene ID" value="ENSPPAG00000000033.1"/>
</dbReference>
<dbReference type="GeneID" id="807873"/>
<dbReference type="KEGG" id="pps:807873"/>
<dbReference type="CTD" id="4541"/>
<dbReference type="GeneTree" id="ENSGT00390000003988"/>
<dbReference type="OMA" id="WVIYDTG"/>
<dbReference type="Proteomes" id="UP000240080">
    <property type="component" value="Mitochondrion"/>
</dbReference>
<dbReference type="Bgee" id="ENSPPAG00000000033">
    <property type="expression patterns" value="Expressed in cerebellum and 6 other cell types or tissues"/>
</dbReference>
<dbReference type="GO" id="GO:0005743">
    <property type="term" value="C:mitochondrial inner membrane"/>
    <property type="evidence" value="ECO:0000250"/>
    <property type="project" value="UniProtKB"/>
</dbReference>
<dbReference type="GO" id="GO:0045271">
    <property type="term" value="C:respiratory chain complex I"/>
    <property type="evidence" value="ECO:0007669"/>
    <property type="project" value="Ensembl"/>
</dbReference>
<dbReference type="GO" id="GO:0008137">
    <property type="term" value="F:NADH dehydrogenase (ubiquinone) activity"/>
    <property type="evidence" value="ECO:0000250"/>
    <property type="project" value="UniProtKB"/>
</dbReference>
<dbReference type="GO" id="GO:0006120">
    <property type="term" value="P:mitochondrial electron transport, NADH to ubiquinone"/>
    <property type="evidence" value="ECO:0000250"/>
    <property type="project" value="UniProtKB"/>
</dbReference>
<dbReference type="GO" id="GO:0032981">
    <property type="term" value="P:mitochondrial respiratory chain complex I assembly"/>
    <property type="evidence" value="ECO:0000250"/>
    <property type="project" value="UniProtKB"/>
</dbReference>
<dbReference type="InterPro" id="IPR050269">
    <property type="entry name" value="ComplexI_Subunit6"/>
</dbReference>
<dbReference type="InterPro" id="IPR001457">
    <property type="entry name" value="NADH_UbQ/plastoQ_OxRdtase_su6"/>
</dbReference>
<dbReference type="PANTHER" id="PTHR11435">
    <property type="entry name" value="NADH UBIQUINONE OXIDOREDUCTASE SUBUNIT ND6"/>
    <property type="match status" value="1"/>
</dbReference>
<dbReference type="PANTHER" id="PTHR11435:SF1">
    <property type="entry name" value="NADH-UBIQUINONE OXIDOREDUCTASE CHAIN 6"/>
    <property type="match status" value="1"/>
</dbReference>
<dbReference type="Pfam" id="PF00499">
    <property type="entry name" value="Oxidored_q3"/>
    <property type="match status" value="1"/>
</dbReference>
<geneLocation type="mitochondrion"/>
<reference key="1">
    <citation type="journal article" date="1995" name="Proc. Natl. Acad. Sci. U.S.A.">
        <title>Recent African origin of modern humans revealed by complete sequences of hominoid mitochondrial DNAs.</title>
        <authorList>
            <person name="Horai S."/>
            <person name="Hayasaka K."/>
            <person name="Kondo R."/>
            <person name="Tsugane K."/>
            <person name="Takahata N."/>
        </authorList>
    </citation>
    <scope>NUCLEOTIDE SEQUENCE [GENOMIC DNA]</scope>
</reference>
<comment type="function">
    <text evidence="1">Core subunit of the mitochondrial membrane respiratory chain NADH dehydrogenase (Complex I) which catalyzes electron transfer from NADH through the respiratory chain, using ubiquinone as an electron acceptor. Essential for the catalytic activity and assembly of complex I.</text>
</comment>
<comment type="catalytic activity">
    <reaction evidence="1">
        <text>a ubiquinone + NADH + 5 H(+)(in) = a ubiquinol + NAD(+) + 4 H(+)(out)</text>
        <dbReference type="Rhea" id="RHEA:29091"/>
        <dbReference type="Rhea" id="RHEA-COMP:9565"/>
        <dbReference type="Rhea" id="RHEA-COMP:9566"/>
        <dbReference type="ChEBI" id="CHEBI:15378"/>
        <dbReference type="ChEBI" id="CHEBI:16389"/>
        <dbReference type="ChEBI" id="CHEBI:17976"/>
        <dbReference type="ChEBI" id="CHEBI:57540"/>
        <dbReference type="ChEBI" id="CHEBI:57945"/>
        <dbReference type="EC" id="7.1.1.2"/>
    </reaction>
</comment>
<comment type="subunit">
    <text evidence="2">Core subunit of respiratory chain NADH dehydrogenase (Complex I) which is composed of 45 different subunits.</text>
</comment>
<comment type="subcellular location">
    <subcellularLocation>
        <location evidence="2">Mitochondrion inner membrane</location>
        <topology evidence="3">Multi-pass membrane protein</topology>
    </subcellularLocation>
</comment>
<comment type="similarity">
    <text evidence="4">Belongs to the complex I subunit 6 family.</text>
</comment>
<keyword id="KW-0249">Electron transport</keyword>
<keyword id="KW-0472">Membrane</keyword>
<keyword id="KW-0496">Mitochondrion</keyword>
<keyword id="KW-0999">Mitochondrion inner membrane</keyword>
<keyword id="KW-0520">NAD</keyword>
<keyword id="KW-1185">Reference proteome</keyword>
<keyword id="KW-0679">Respiratory chain</keyword>
<keyword id="KW-1278">Translocase</keyword>
<keyword id="KW-0812">Transmembrane</keyword>
<keyword id="KW-1133">Transmembrane helix</keyword>
<keyword id="KW-0813">Transport</keyword>
<keyword id="KW-0830">Ubiquinone</keyword>
<protein>
    <recommendedName>
        <fullName>NADH-ubiquinone oxidoreductase chain 6</fullName>
        <ecNumber evidence="1">7.1.1.2</ecNumber>
    </recommendedName>
    <alternativeName>
        <fullName>NADH dehydrogenase subunit 6</fullName>
    </alternativeName>
</protein>
<sequence>MTYVLFLLSVSLVMGFVGFSSKPSPIYGGLVLIVSGVVGCTIILNYGGGYMGLMVFLIYLGGMMVVFGYTTAMAIEEYPEAWGSGVEVLVSVLVGLAMEVGLVLWVKEYDGVVVVVNFNSVGSWMIYEGEGPGLIREDPIGAGALYDYGRWLVVVTGWTLFVGVYIVIEIARGN</sequence>
<accession>Q9T9W5</accession>